<protein>
    <recommendedName>
        <fullName evidence="1">Elongation factor 4</fullName>
        <shortName evidence="1">EF-4</shortName>
        <ecNumber evidence="1">3.6.5.n1</ecNumber>
    </recommendedName>
    <alternativeName>
        <fullName evidence="1">Ribosomal back-translocase LepA</fullName>
    </alternativeName>
</protein>
<feature type="chain" id="PRO_0000176356" description="Elongation factor 4">
    <location>
        <begin position="1"/>
        <end position="610"/>
    </location>
</feature>
<feature type="domain" description="tr-type G">
    <location>
        <begin position="11"/>
        <end position="193"/>
    </location>
</feature>
<feature type="binding site" evidence="1">
    <location>
        <begin position="23"/>
        <end position="28"/>
    </location>
    <ligand>
        <name>GTP</name>
        <dbReference type="ChEBI" id="CHEBI:37565"/>
    </ligand>
</feature>
<feature type="binding site" evidence="1">
    <location>
        <begin position="140"/>
        <end position="143"/>
    </location>
    <ligand>
        <name>GTP</name>
        <dbReference type="ChEBI" id="CHEBI:37565"/>
    </ligand>
</feature>
<evidence type="ECO:0000255" key="1">
    <source>
        <dbReference type="HAMAP-Rule" id="MF_00071"/>
    </source>
</evidence>
<gene>
    <name evidence="1" type="primary">lepA</name>
    <name type="ordered locus">SpyM3_0737</name>
</gene>
<comment type="function">
    <text evidence="1">Required for accurate and efficient protein synthesis under certain stress conditions. May act as a fidelity factor of the translation reaction, by catalyzing a one-codon backward translocation of tRNAs on improperly translocated ribosomes. Back-translocation proceeds from a post-translocation (POST) complex to a pre-translocation (PRE) complex, thus giving elongation factor G a second chance to translocate the tRNAs correctly. Binds to ribosomes in a GTP-dependent manner.</text>
</comment>
<comment type="catalytic activity">
    <reaction evidence="1">
        <text>GTP + H2O = GDP + phosphate + H(+)</text>
        <dbReference type="Rhea" id="RHEA:19669"/>
        <dbReference type="ChEBI" id="CHEBI:15377"/>
        <dbReference type="ChEBI" id="CHEBI:15378"/>
        <dbReference type="ChEBI" id="CHEBI:37565"/>
        <dbReference type="ChEBI" id="CHEBI:43474"/>
        <dbReference type="ChEBI" id="CHEBI:58189"/>
        <dbReference type="EC" id="3.6.5.n1"/>
    </reaction>
</comment>
<comment type="subcellular location">
    <subcellularLocation>
        <location evidence="1">Cell membrane</location>
        <topology evidence="1">Peripheral membrane protein</topology>
        <orientation evidence="1">Cytoplasmic side</orientation>
    </subcellularLocation>
</comment>
<comment type="similarity">
    <text evidence="1">Belongs to the TRAFAC class translation factor GTPase superfamily. Classic translation factor GTPase family. LepA subfamily.</text>
</comment>
<dbReference type="EC" id="3.6.5.n1" evidence="1"/>
<dbReference type="EMBL" id="AE014074">
    <property type="protein sequence ID" value="AAM79344.1"/>
    <property type="molecule type" value="Genomic_DNA"/>
</dbReference>
<dbReference type="RefSeq" id="WP_011054451.1">
    <property type="nucleotide sequence ID" value="NC_004070.1"/>
</dbReference>
<dbReference type="SMR" id="P0DC22"/>
<dbReference type="KEGG" id="spg:SpyM3_0737"/>
<dbReference type="HOGENOM" id="CLU_009995_3_3_9"/>
<dbReference type="Proteomes" id="UP000000564">
    <property type="component" value="Chromosome"/>
</dbReference>
<dbReference type="GO" id="GO:0005886">
    <property type="term" value="C:plasma membrane"/>
    <property type="evidence" value="ECO:0007669"/>
    <property type="project" value="UniProtKB-SubCell"/>
</dbReference>
<dbReference type="GO" id="GO:0005525">
    <property type="term" value="F:GTP binding"/>
    <property type="evidence" value="ECO:0007669"/>
    <property type="project" value="UniProtKB-UniRule"/>
</dbReference>
<dbReference type="GO" id="GO:0003924">
    <property type="term" value="F:GTPase activity"/>
    <property type="evidence" value="ECO:0007669"/>
    <property type="project" value="UniProtKB-UniRule"/>
</dbReference>
<dbReference type="GO" id="GO:0043022">
    <property type="term" value="F:ribosome binding"/>
    <property type="evidence" value="ECO:0007669"/>
    <property type="project" value="UniProtKB-UniRule"/>
</dbReference>
<dbReference type="GO" id="GO:0003746">
    <property type="term" value="F:translation elongation factor activity"/>
    <property type="evidence" value="ECO:0007669"/>
    <property type="project" value="UniProtKB-UniRule"/>
</dbReference>
<dbReference type="GO" id="GO:0045727">
    <property type="term" value="P:positive regulation of translation"/>
    <property type="evidence" value="ECO:0007669"/>
    <property type="project" value="UniProtKB-UniRule"/>
</dbReference>
<dbReference type="CDD" id="cd03699">
    <property type="entry name" value="EF4_II"/>
    <property type="match status" value="1"/>
</dbReference>
<dbReference type="CDD" id="cd16260">
    <property type="entry name" value="EF4_III"/>
    <property type="match status" value="1"/>
</dbReference>
<dbReference type="CDD" id="cd01890">
    <property type="entry name" value="LepA"/>
    <property type="match status" value="1"/>
</dbReference>
<dbReference type="CDD" id="cd03709">
    <property type="entry name" value="lepA_C"/>
    <property type="match status" value="1"/>
</dbReference>
<dbReference type="FunFam" id="3.40.50.300:FF:000078">
    <property type="entry name" value="Elongation factor 4"/>
    <property type="match status" value="1"/>
</dbReference>
<dbReference type="FunFam" id="2.40.30.10:FF:000015">
    <property type="entry name" value="Translation factor GUF1, mitochondrial"/>
    <property type="match status" value="1"/>
</dbReference>
<dbReference type="FunFam" id="3.30.70.240:FF:000007">
    <property type="entry name" value="Translation factor GUF1, mitochondrial"/>
    <property type="match status" value="1"/>
</dbReference>
<dbReference type="FunFam" id="3.30.70.2570:FF:000001">
    <property type="entry name" value="Translation factor GUF1, mitochondrial"/>
    <property type="match status" value="1"/>
</dbReference>
<dbReference type="FunFam" id="3.30.70.870:FF:000004">
    <property type="entry name" value="Translation factor GUF1, mitochondrial"/>
    <property type="match status" value="1"/>
</dbReference>
<dbReference type="Gene3D" id="3.30.70.240">
    <property type="match status" value="1"/>
</dbReference>
<dbReference type="Gene3D" id="3.30.70.2570">
    <property type="entry name" value="Elongation factor 4, C-terminal domain"/>
    <property type="match status" value="1"/>
</dbReference>
<dbReference type="Gene3D" id="3.30.70.870">
    <property type="entry name" value="Elongation Factor G (Translational Gtpase), domain 3"/>
    <property type="match status" value="1"/>
</dbReference>
<dbReference type="Gene3D" id="3.40.50.300">
    <property type="entry name" value="P-loop containing nucleotide triphosphate hydrolases"/>
    <property type="match status" value="1"/>
</dbReference>
<dbReference type="Gene3D" id="2.40.30.10">
    <property type="entry name" value="Translation factors"/>
    <property type="match status" value="1"/>
</dbReference>
<dbReference type="HAMAP" id="MF_00071">
    <property type="entry name" value="LepA"/>
    <property type="match status" value="1"/>
</dbReference>
<dbReference type="InterPro" id="IPR006297">
    <property type="entry name" value="EF-4"/>
</dbReference>
<dbReference type="InterPro" id="IPR041095">
    <property type="entry name" value="EFG_II"/>
</dbReference>
<dbReference type="InterPro" id="IPR035647">
    <property type="entry name" value="EFG_III/V"/>
</dbReference>
<dbReference type="InterPro" id="IPR000640">
    <property type="entry name" value="EFG_V-like"/>
</dbReference>
<dbReference type="InterPro" id="IPR004161">
    <property type="entry name" value="EFTu-like_2"/>
</dbReference>
<dbReference type="InterPro" id="IPR031157">
    <property type="entry name" value="G_TR_CS"/>
</dbReference>
<dbReference type="InterPro" id="IPR038363">
    <property type="entry name" value="LepA_C_sf"/>
</dbReference>
<dbReference type="InterPro" id="IPR013842">
    <property type="entry name" value="LepA_CTD"/>
</dbReference>
<dbReference type="InterPro" id="IPR035654">
    <property type="entry name" value="LepA_IV"/>
</dbReference>
<dbReference type="InterPro" id="IPR027417">
    <property type="entry name" value="P-loop_NTPase"/>
</dbReference>
<dbReference type="InterPro" id="IPR005225">
    <property type="entry name" value="Small_GTP-bd"/>
</dbReference>
<dbReference type="InterPro" id="IPR000795">
    <property type="entry name" value="T_Tr_GTP-bd_dom"/>
</dbReference>
<dbReference type="InterPro" id="IPR009000">
    <property type="entry name" value="Transl_B-barrel_sf"/>
</dbReference>
<dbReference type="NCBIfam" id="TIGR01393">
    <property type="entry name" value="lepA"/>
    <property type="match status" value="1"/>
</dbReference>
<dbReference type="NCBIfam" id="TIGR00231">
    <property type="entry name" value="small_GTP"/>
    <property type="match status" value="1"/>
</dbReference>
<dbReference type="PANTHER" id="PTHR43512:SF4">
    <property type="entry name" value="TRANSLATION FACTOR GUF1 HOMOLOG, CHLOROPLASTIC"/>
    <property type="match status" value="1"/>
</dbReference>
<dbReference type="PANTHER" id="PTHR43512">
    <property type="entry name" value="TRANSLATION FACTOR GUF1-RELATED"/>
    <property type="match status" value="1"/>
</dbReference>
<dbReference type="Pfam" id="PF00679">
    <property type="entry name" value="EFG_C"/>
    <property type="match status" value="1"/>
</dbReference>
<dbReference type="Pfam" id="PF14492">
    <property type="entry name" value="EFG_III"/>
    <property type="match status" value="1"/>
</dbReference>
<dbReference type="Pfam" id="PF00009">
    <property type="entry name" value="GTP_EFTU"/>
    <property type="match status" value="1"/>
</dbReference>
<dbReference type="Pfam" id="PF03144">
    <property type="entry name" value="GTP_EFTU_D2"/>
    <property type="match status" value="1"/>
</dbReference>
<dbReference type="Pfam" id="PF06421">
    <property type="entry name" value="LepA_C"/>
    <property type="match status" value="1"/>
</dbReference>
<dbReference type="PRINTS" id="PR00315">
    <property type="entry name" value="ELONGATNFCT"/>
</dbReference>
<dbReference type="SMART" id="SM00838">
    <property type="entry name" value="EFG_C"/>
    <property type="match status" value="1"/>
</dbReference>
<dbReference type="SUPFAM" id="SSF54980">
    <property type="entry name" value="EF-G C-terminal domain-like"/>
    <property type="match status" value="2"/>
</dbReference>
<dbReference type="SUPFAM" id="SSF52540">
    <property type="entry name" value="P-loop containing nucleoside triphosphate hydrolases"/>
    <property type="match status" value="1"/>
</dbReference>
<dbReference type="SUPFAM" id="SSF50447">
    <property type="entry name" value="Translation proteins"/>
    <property type="match status" value="1"/>
</dbReference>
<dbReference type="PROSITE" id="PS00301">
    <property type="entry name" value="G_TR_1"/>
    <property type="match status" value="1"/>
</dbReference>
<dbReference type="PROSITE" id="PS51722">
    <property type="entry name" value="G_TR_2"/>
    <property type="match status" value="1"/>
</dbReference>
<sequence length="610" mass="68136">MNSQDLKKRQEKIRNFSIIAHIDHGKSTLADRILEKTETVSSREMQAQLLDSMDLERERGITIKLNAIELNYTARDGETYIFHLIDTPGHVDFTYEVSRSLAACEGAILVVDAAQGIEAQTLANVYLALDNDLEILPVINKIDLPAADPERVCHEVEDVIGLDASEAVLASAKAGIGIEEILEQIVEKVPAPTGDVDAPLQALIFDSVYDAYRGVILQVRIVNGIVKPGDKIQMMSNGKTFDVTEVGIFTPKAVGRDFLATGDVGYVAASIKTVADTRVGDTVTLANNPAKEALHGYKQMNPMVFAGIYPIESNKYNDLREALEKLQLNDASLQFEPETSQALGFGFRCGFLGLLHMDVIQERLEREFNIDLIMTAPSVVYHVHTTDEDMIEVSNPSEFPDPTRVAFIEEPYVKAQIMVPQEFVGAVMELSQRKRGDFVTMDYIDDNRVNVIYQIPLAEIVFDFFDKLKSSTRGYASFDYDMSEYRRSQLVKMDILLNGDKVDALSFIVHKEFAYERGKIIVEKLKKIIPRQQFEVPIQAAIGQKIVARSDIKALRKNVLAKCYGGDVSRKRKLLEKQKAGKKRMKAIGSVEVPQEAFLSVLSMDDDAKK</sequence>
<keyword id="KW-1003">Cell membrane</keyword>
<keyword id="KW-0342">GTP-binding</keyword>
<keyword id="KW-0378">Hydrolase</keyword>
<keyword id="KW-0472">Membrane</keyword>
<keyword id="KW-0547">Nucleotide-binding</keyword>
<keyword id="KW-0648">Protein biosynthesis</keyword>
<proteinExistence type="inferred from homology"/>
<name>LEPA_STRP3</name>
<organism>
    <name type="scientific">Streptococcus pyogenes serotype M3 (strain ATCC BAA-595 / MGAS315)</name>
    <dbReference type="NCBI Taxonomy" id="198466"/>
    <lineage>
        <taxon>Bacteria</taxon>
        <taxon>Bacillati</taxon>
        <taxon>Bacillota</taxon>
        <taxon>Bacilli</taxon>
        <taxon>Lactobacillales</taxon>
        <taxon>Streptococcaceae</taxon>
        <taxon>Streptococcus</taxon>
    </lineage>
</organism>
<reference key="1">
    <citation type="journal article" date="2002" name="Proc. Natl. Acad. Sci. U.S.A.">
        <title>Genome sequence of a serotype M3 strain of group A Streptococcus: phage-encoded toxins, the high-virulence phenotype, and clone emergence.</title>
        <authorList>
            <person name="Beres S.B."/>
            <person name="Sylva G.L."/>
            <person name="Barbian K.D."/>
            <person name="Lei B."/>
            <person name="Hoff J.S."/>
            <person name="Mammarella N.D."/>
            <person name="Liu M.-Y."/>
            <person name="Smoot J.C."/>
            <person name="Porcella S.F."/>
            <person name="Parkins L.D."/>
            <person name="Campbell D.S."/>
            <person name="Smith T.M."/>
            <person name="McCormick J.K."/>
            <person name="Leung D.Y.M."/>
            <person name="Schlievert P.M."/>
            <person name="Musser J.M."/>
        </authorList>
    </citation>
    <scope>NUCLEOTIDE SEQUENCE [LARGE SCALE GENOMIC DNA]</scope>
    <source>
        <strain>ATCC BAA-595 / MGAS315</strain>
    </source>
</reference>
<accession>P0DC22</accession>
<accession>Q8K7M8</accession>